<reference evidence="12 13" key="1">
    <citation type="journal article" date="1990" name="J. Chromatogr. A">
        <title>Purification and characterization of hementin, a fibrinogenolytic protease from the leech Haementeria ghilianii.</title>
        <authorList>
            <person name="Swadesh J.K."/>
            <person name="Huang I.Y."/>
            <person name="Budzynski A.Z."/>
        </authorList>
    </citation>
    <scope>PROTEIN SEQUENCE OF 1-10</scope>
    <scope>FUNCTION</scope>
    <source>
        <tissue evidence="4">Salivary gland</tissue>
    </source>
</reference>
<reference evidence="12" key="2">
    <citation type="submission" date="2010-05" db="UniProtKB">
        <authorList>
            <person name="Faria F."/>
        </authorList>
    </citation>
    <scope>PROTEIN SEQUENCE OF 11-39</scope>
</reference>
<reference evidence="12" key="3">
    <citation type="journal article" date="1984" name="J. Lab. Clin. Med.">
        <title>Hementin: anticoagulant protease from the salivary gland of the leech Haementeria ghilianii.</title>
        <authorList>
            <person name="Malinconico S.M."/>
            <person name="Katz J.B."/>
            <person name="Budzynski A.Z."/>
        </authorList>
    </citation>
    <scope>FUNCTION</scope>
    <scope>COFACTOR</scope>
    <scope>ACTIVITY REGULATION</scope>
    <scope>BIOPHYSICOCHEMICAL PROPERTIES</scope>
</reference>
<reference evidence="12" key="4">
    <citation type="journal article" date="1984" name="J. Lab. Clin. Med.">
        <title>Fibrinogen degradation by hementin, a fibrinogenolytic anticoagulant from the salivary glands of the leech Haementeria ghilianii.</title>
        <authorList>
            <person name="Malinconico S.M."/>
            <person name="Katz J.B."/>
            <person name="Budzynski A.Z."/>
        </authorList>
    </citation>
    <scope>FUNCTION</scope>
    <scope>BIOPHYSICOCHEMICAL PROPERTIES</scope>
</reference>
<reference evidence="12" key="5">
    <citation type="journal article" date="1990" name="J. Biol. Chem.">
        <title>A unique proteolytic fragment of human fibrinogen containing the A alpha COOH-terminal domain of the native molecule.</title>
        <authorList>
            <person name="Kirschbaum N.E."/>
            <person name="Budzynski A.Z."/>
        </authorList>
    </citation>
    <scope>FUNCTION</scope>
    <scope>CLEAVAGE SITES IN FIBRINOGEN CHAINS</scope>
</reference>
<reference evidence="12" key="6">
    <citation type="journal article" date="1991" name="Blood Coagul. Fibrinolysis">
        <title>The biological function of hementin in the proboscis of the leech Haementeria ghilianii.</title>
        <authorList>
            <person name="Sawyer R.T."/>
            <person name="Jones C.P."/>
            <person name="Munro R."/>
        </authorList>
    </citation>
    <scope>FUNCTION</scope>
    <scope>ACTIVITY REGULATION</scope>
</reference>
<reference evidence="12" key="7">
    <citation type="journal article" date="1991" name="Comp. Haematol. Intern.">
        <title>Secretion of hementin and other antihaemostatic factors in the salivary gland complex of the giant amazon leech Haementeria ghilianii.</title>
        <authorList>
            <person name="Sawyer R.T."/>
            <person name="Casellas M."/>
            <person name="Munro R."/>
            <person name="Jones C.P."/>
        </authorList>
    </citation>
    <scope>FUNCTION</scope>
    <scope>SUBCELLULAR LOCATION</scope>
    <scope>TISSUE SPECIFICITY</scope>
</reference>
<reference evidence="12" key="8">
    <citation type="journal article" date="1992" name="Blood Coagul. Fibrinolysis">
        <title>Studies on the anticoagulant properties of hementin.</title>
        <authorList>
            <person name="Electricwala A."/>
        </authorList>
    </citation>
    <scope>FUNCTION</scope>
</reference>
<reference evidence="12" key="9">
    <citation type="journal article" date="1997" name="Blood Coagul. Fibrinolysis">
        <title>Reduction of plasma clot stability by a novel factor XIIIa inhibitor from the Giant Amazon Leech, Haementeria ghilianii.</title>
        <authorList>
            <person name="Wallis R.B."/>
            <person name="Seale L."/>
            <person name="Finney S."/>
            <person name="Sawyer R.T."/>
            <person name="Bennett G.M."/>
            <person name="Ross-Murphy S.B."/>
        </authorList>
    </citation>
    <scope>FUNCTION</scope>
</reference>
<reference evidence="12" key="10">
    <citation type="journal article" date="1997" name="Thromb. Haemost.">
        <title>Tridegin, a novel peptidic inhibitor of factor XIIIa from the leech, Haementeria ghilianii, enhances fibrinolysis in vitro.</title>
        <authorList>
            <person name="Seale L."/>
            <person name="Finney S."/>
            <person name="Sawyer R.T."/>
            <person name="Wallis R.B."/>
        </authorList>
    </citation>
    <scope>FUNCTION</scope>
</reference>
<sequence length="39" mass="4286">TTLTEPEPDLTYLTFVXIVXXEMPIFVMATANSGITSTF</sequence>
<dbReference type="EC" id="3.4.24.-"/>
<dbReference type="PIR" id="A61007">
    <property type="entry name" value="A61007"/>
</dbReference>
<dbReference type="GO" id="GO:0005576">
    <property type="term" value="C:extracellular region"/>
    <property type="evidence" value="ECO:0007669"/>
    <property type="project" value="UniProtKB-SubCell"/>
</dbReference>
<dbReference type="GO" id="GO:0008237">
    <property type="term" value="F:metallopeptidase activity"/>
    <property type="evidence" value="ECO:0007669"/>
    <property type="project" value="UniProtKB-KW"/>
</dbReference>
<dbReference type="GO" id="GO:0090729">
    <property type="term" value="F:toxin activity"/>
    <property type="evidence" value="ECO:0007669"/>
    <property type="project" value="UniProtKB-KW"/>
</dbReference>
<dbReference type="GO" id="GO:0006508">
    <property type="term" value="P:proteolysis"/>
    <property type="evidence" value="ECO:0007669"/>
    <property type="project" value="UniProtKB-KW"/>
</dbReference>
<accession>Q7M3P9</accession>
<feature type="chain" id="PRO_0000397939" description="Hementin">
    <location>
        <begin position="1"/>
        <end position="39" status="greater than"/>
    </location>
</feature>
<feature type="non-consecutive residues" evidence="12">
    <location>
        <begin position="10"/>
        <end position="11"/>
    </location>
</feature>
<feature type="non-terminal residue">
    <location>
        <position position="39"/>
    </location>
</feature>
<keyword id="KW-0903">Direct protein sequencing</keyword>
<keyword id="KW-1205">Fibrinolytic toxin</keyword>
<keyword id="KW-1199">Hemostasis impairing toxin</keyword>
<keyword id="KW-0378">Hydrolase</keyword>
<keyword id="KW-0482">Metalloprotease</keyword>
<keyword id="KW-1201">Platelet aggregation inhibiting toxin</keyword>
<keyword id="KW-0645">Protease</keyword>
<keyword id="KW-0964">Secreted</keyword>
<keyword id="KW-0800">Toxin</keyword>
<protein>
    <recommendedName>
        <fullName evidence="10 11">Hementin</fullName>
        <ecNumber>3.4.24.-</ecNumber>
    </recommendedName>
</protein>
<proteinExistence type="evidence at protein level"/>
<comment type="function">
    <text evidence="1 2 3 4 5 6 7 8 9">Metalloprotease with anticoagulant activity. Cleaves fibrinogen Aalpha (FGA), gamma (FGG) and Bbeta (FGB) chains after positions 'Asn-121', 'Lys-160' and 'Pro-102', respectively. Breaks down cross-linked and non-cross-linked fibrin clots. Prevents and reverts platelet aggregation induced by ADP and collagen. Prevents thrombin-induced platelet clotting. Does not affect plasma levels of coagulation factors prothrombin (F2), V (F5), VII (F7), VIII (F8), IX (F9), X (F10), XI (F11), XII (F12), plasma kallikrein (KLKB1) and kininogen-1 (KNG1).</text>
</comment>
<comment type="cofactor">
    <cofactor evidence="5">
        <name>a divalent metal cation</name>
        <dbReference type="ChEBI" id="CHEBI:60240"/>
    </cofactor>
</comment>
<comment type="activity regulation">
    <text evidence="2 5">Inhibited by EDTA, cysteine, DTT and sodium phosphate. Partially inhibited by EGTA, citrate, Tris and glycine. Not inhibited by DFP, PMSF, iodoacetic acid and leupeptin. Requires sodium chloride concentrations higher than 0.15 M for activity.</text>
</comment>
<comment type="biophysicochemical properties">
    <kinetics>
        <KM evidence="5 6">1 uM for fibrinogen</KM>
        <Vmax evidence="5 6">26.0 nmol/min/mg enzyme with fibrinogen as substrate</Vmax>
        <Vmax evidence="5 6">2.4 pmol/sec/mg enzyme with cross-linked fibrin clots as substrate (with enzyme incorporated in clot)</Vmax>
        <Vmax evidence="5 6">2.6 pmol/sec/mg enzyme with non-cross-linked fibrin clots as substrate (with enzyme incorporated in clot)</Vmax>
        <Vmax evidence="5 6">0.011 pmol/sec/mg enzyme with cross-linked fibrin clots as substrate (with enzyme external to clot)</Vmax>
        <Vmax evidence="5 6">0.05 pmol/sec/mg enzyme with non-cross-linked fibrin clots as substrate (with enzyme external to clot)</Vmax>
    </kinetics>
    <phDependence>
        <text evidence="5 6">Optimum pH is 7.5. Active from pH 5.5 to 11.</text>
    </phDependence>
    <temperatureDependence>
        <text evidence="5 6">Active at 37 degrees Celsius. Activity reversibly reduced to 26% and 0% at 25 degrees Celsius and 4 degrees Celsius, respectively. Complete and irreversible loss of activity after 15 minutes at 60 degrees Celsius.</text>
    </temperatureDependence>
</comment>
<comment type="subcellular location">
    <subcellularLocation>
        <location evidence="9">Secreted</location>
    </subcellularLocation>
</comment>
<comment type="tissue specificity">
    <text evidence="9">Expressed mainly in the posterior salivary glands and, to a lesser extent, in the anterior salivary glands and secreted into the proboscis (at protein level).</text>
</comment>
<comment type="miscellaneous">
    <text evidence="2 9">Presumably not injected into the host's bloodstream, as feeding by H.ghilianii does not cause prolonged bleeding of resulting wounds.</text>
</comment>
<organism>
    <name type="scientific">Haementeria ghilianii</name>
    <name type="common">Amazon leech</name>
    <dbReference type="NCBI Taxonomy" id="6409"/>
    <lineage>
        <taxon>Eukaryota</taxon>
        <taxon>Metazoa</taxon>
        <taxon>Spiralia</taxon>
        <taxon>Lophotrochozoa</taxon>
        <taxon>Annelida</taxon>
        <taxon>Clitellata</taxon>
        <taxon>Hirudinea</taxon>
        <taxon>Rhynchobdellida</taxon>
        <taxon>Glossiphoniidae</taxon>
        <taxon>Haementeria</taxon>
    </lineage>
</organism>
<name>HTN_HAEGH</name>
<evidence type="ECO:0000269" key="1">
    <source>
    </source>
</evidence>
<evidence type="ECO:0000269" key="2">
    <source>
    </source>
</evidence>
<evidence type="ECO:0000269" key="3">
    <source>
    </source>
</evidence>
<evidence type="ECO:0000269" key="4">
    <source>
    </source>
</evidence>
<evidence type="ECO:0000269" key="5">
    <source>
    </source>
</evidence>
<evidence type="ECO:0000269" key="6">
    <source>
    </source>
</evidence>
<evidence type="ECO:0000269" key="7">
    <source>
    </source>
</evidence>
<evidence type="ECO:0000269" key="8">
    <source>
    </source>
</evidence>
<evidence type="ECO:0000269" key="9">
    <source ref="7"/>
</evidence>
<evidence type="ECO:0000303" key="10">
    <source>
    </source>
</evidence>
<evidence type="ECO:0000303" key="11">
    <source>
    </source>
</evidence>
<evidence type="ECO:0000305" key="12"/>
<evidence type="ECO:0000312" key="13">
    <source>
        <dbReference type="PIR" id="A61007"/>
    </source>
</evidence>